<name>HIR2_CANGA</name>
<dbReference type="EMBL" id="CR380955">
    <property type="protein sequence ID" value="CAG60233.1"/>
    <property type="molecule type" value="Genomic_DNA"/>
</dbReference>
<dbReference type="RefSeq" id="XP_447296.1">
    <property type="nucleotide sequence ID" value="XM_447296.1"/>
</dbReference>
<dbReference type="SMR" id="Q6FR48"/>
<dbReference type="FunCoup" id="Q6FR48">
    <property type="interactions" value="509"/>
</dbReference>
<dbReference type="STRING" id="284593.Q6FR48"/>
<dbReference type="EnsemblFungi" id="CAGL0I00968g-T">
    <property type="protein sequence ID" value="CAGL0I00968g-T-p1"/>
    <property type="gene ID" value="CAGL0I00968g"/>
</dbReference>
<dbReference type="KEGG" id="cgr:2888912"/>
<dbReference type="CGD" id="CAL0129945">
    <property type="gene designation" value="CAGL0I00968g"/>
</dbReference>
<dbReference type="VEuPathDB" id="FungiDB:CAGL0I00968g"/>
<dbReference type="eggNOG" id="KOG0973">
    <property type="taxonomic scope" value="Eukaryota"/>
</dbReference>
<dbReference type="HOGENOM" id="CLU_004372_1_0_1"/>
<dbReference type="InParanoid" id="Q6FR48"/>
<dbReference type="OMA" id="AWVHHDD"/>
<dbReference type="Proteomes" id="UP000002428">
    <property type="component" value="Chromosome I"/>
</dbReference>
<dbReference type="GO" id="GO:0000785">
    <property type="term" value="C:chromatin"/>
    <property type="evidence" value="ECO:0007669"/>
    <property type="project" value="TreeGrafter"/>
</dbReference>
<dbReference type="GO" id="GO:0005829">
    <property type="term" value="C:cytosol"/>
    <property type="evidence" value="ECO:0007669"/>
    <property type="project" value="EnsemblFungi"/>
</dbReference>
<dbReference type="GO" id="GO:0000417">
    <property type="term" value="C:HIR complex"/>
    <property type="evidence" value="ECO:0007669"/>
    <property type="project" value="EnsemblFungi"/>
</dbReference>
<dbReference type="GO" id="GO:0005634">
    <property type="term" value="C:nucleus"/>
    <property type="evidence" value="ECO:0007669"/>
    <property type="project" value="UniProtKB-SubCell"/>
</dbReference>
<dbReference type="GO" id="GO:0003677">
    <property type="term" value="F:DNA binding"/>
    <property type="evidence" value="ECO:0007669"/>
    <property type="project" value="EnsemblFungi"/>
</dbReference>
<dbReference type="GO" id="GO:0031491">
    <property type="term" value="F:nucleosome binding"/>
    <property type="evidence" value="ECO:0007669"/>
    <property type="project" value="EnsemblFungi"/>
</dbReference>
<dbReference type="GO" id="GO:0003714">
    <property type="term" value="F:transcription corepressor activity"/>
    <property type="evidence" value="ECO:0007669"/>
    <property type="project" value="EnsemblFungi"/>
</dbReference>
<dbReference type="GO" id="GO:1905268">
    <property type="term" value="P:negative regulation of chromatin organization"/>
    <property type="evidence" value="ECO:0007669"/>
    <property type="project" value="EnsemblFungi"/>
</dbReference>
<dbReference type="GO" id="GO:0000122">
    <property type="term" value="P:negative regulation of transcription by RNA polymerase II"/>
    <property type="evidence" value="ECO:0007669"/>
    <property type="project" value="EnsemblFungi"/>
</dbReference>
<dbReference type="GO" id="GO:0016480">
    <property type="term" value="P:negative regulation of transcription by RNA polymerase III"/>
    <property type="evidence" value="ECO:0007669"/>
    <property type="project" value="EnsemblFungi"/>
</dbReference>
<dbReference type="GO" id="GO:0006334">
    <property type="term" value="P:nucleosome assembly"/>
    <property type="evidence" value="ECO:0007669"/>
    <property type="project" value="EnsemblFungi"/>
</dbReference>
<dbReference type="GO" id="GO:0140673">
    <property type="term" value="P:transcription elongation-coupled chromatin remodeling"/>
    <property type="evidence" value="ECO:0007669"/>
    <property type="project" value="EnsemblFungi"/>
</dbReference>
<dbReference type="Gene3D" id="2.130.10.10">
    <property type="entry name" value="YVTN repeat-like/Quinoprotein amine dehydrogenase"/>
    <property type="match status" value="2"/>
</dbReference>
<dbReference type="InterPro" id="IPR031120">
    <property type="entry name" value="HIR1-like"/>
</dbReference>
<dbReference type="InterPro" id="IPR011494">
    <property type="entry name" value="HIRA-like_C"/>
</dbReference>
<dbReference type="InterPro" id="IPR015943">
    <property type="entry name" value="WD40/YVTN_repeat-like_dom_sf"/>
</dbReference>
<dbReference type="InterPro" id="IPR036322">
    <property type="entry name" value="WD40_repeat_dom_sf"/>
</dbReference>
<dbReference type="InterPro" id="IPR001680">
    <property type="entry name" value="WD40_rpt"/>
</dbReference>
<dbReference type="PANTHER" id="PTHR13831">
    <property type="entry name" value="MEMBER OF THE HIR1 FAMILY OF WD-REPEAT PROTEINS"/>
    <property type="match status" value="1"/>
</dbReference>
<dbReference type="PANTHER" id="PTHR13831:SF1">
    <property type="entry name" value="PROTEIN HIR2"/>
    <property type="match status" value="1"/>
</dbReference>
<dbReference type="Pfam" id="PF07569">
    <property type="entry name" value="Hira"/>
    <property type="match status" value="1"/>
</dbReference>
<dbReference type="SMART" id="SM00320">
    <property type="entry name" value="WD40"/>
    <property type="match status" value="4"/>
</dbReference>
<dbReference type="SUPFAM" id="SSF82171">
    <property type="entry name" value="DPP6 N-terminal domain-like"/>
    <property type="match status" value="1"/>
</dbReference>
<dbReference type="SUPFAM" id="SSF50978">
    <property type="entry name" value="WD40 repeat-like"/>
    <property type="match status" value="1"/>
</dbReference>
<dbReference type="PROSITE" id="PS00678">
    <property type="entry name" value="WD_REPEATS_1"/>
    <property type="match status" value="1"/>
</dbReference>
<feature type="chain" id="PRO_0000286420" description="Protein HIR2">
    <location>
        <begin position="1"/>
        <end position="997"/>
    </location>
</feature>
<feature type="repeat" description="WD 1">
    <location>
        <begin position="10"/>
        <end position="48"/>
    </location>
</feature>
<feature type="repeat" description="WD 2">
    <location>
        <begin position="117"/>
        <end position="152"/>
    </location>
</feature>
<feature type="repeat" description="WD 3">
    <location>
        <begin position="153"/>
        <end position="194"/>
    </location>
</feature>
<feature type="repeat" description="WD 4">
    <location>
        <begin position="274"/>
        <end position="319"/>
    </location>
</feature>
<feature type="repeat" description="WD 5">
    <location>
        <begin position="323"/>
        <end position="362"/>
    </location>
</feature>
<feature type="repeat" description="WD 6">
    <location>
        <begin position="665"/>
        <end position="706"/>
    </location>
</feature>
<feature type="repeat" description="WD 7">
    <location>
        <begin position="708"/>
        <end position="745"/>
    </location>
</feature>
<feature type="region of interest" description="Disordered" evidence="2">
    <location>
        <begin position="408"/>
        <end position="584"/>
    </location>
</feature>
<feature type="compositionally biased region" description="Polar residues" evidence="2">
    <location>
        <begin position="409"/>
        <end position="446"/>
    </location>
</feature>
<feature type="compositionally biased region" description="Basic and acidic residues" evidence="2">
    <location>
        <begin position="464"/>
        <end position="480"/>
    </location>
</feature>
<feature type="compositionally biased region" description="Polar residues" evidence="2">
    <location>
        <begin position="491"/>
        <end position="501"/>
    </location>
</feature>
<feature type="compositionally biased region" description="Basic and acidic residues" evidence="2">
    <location>
        <begin position="518"/>
        <end position="538"/>
    </location>
</feature>
<feature type="compositionally biased region" description="Polar residues" evidence="2">
    <location>
        <begin position="539"/>
        <end position="567"/>
    </location>
</feature>
<protein>
    <recommendedName>
        <fullName>Protein HIR2</fullName>
    </recommendedName>
</protein>
<proteinExistence type="inferred from homology"/>
<accession>Q6FR48</accession>
<reference key="1">
    <citation type="journal article" date="2004" name="Nature">
        <title>Genome evolution in yeasts.</title>
        <authorList>
            <person name="Dujon B."/>
            <person name="Sherman D."/>
            <person name="Fischer G."/>
            <person name="Durrens P."/>
            <person name="Casaregola S."/>
            <person name="Lafontaine I."/>
            <person name="de Montigny J."/>
            <person name="Marck C."/>
            <person name="Neuveglise C."/>
            <person name="Talla E."/>
            <person name="Goffard N."/>
            <person name="Frangeul L."/>
            <person name="Aigle M."/>
            <person name="Anthouard V."/>
            <person name="Babour A."/>
            <person name="Barbe V."/>
            <person name="Barnay S."/>
            <person name="Blanchin S."/>
            <person name="Beckerich J.-M."/>
            <person name="Beyne E."/>
            <person name="Bleykasten C."/>
            <person name="Boisrame A."/>
            <person name="Boyer J."/>
            <person name="Cattolico L."/>
            <person name="Confanioleri F."/>
            <person name="de Daruvar A."/>
            <person name="Despons L."/>
            <person name="Fabre E."/>
            <person name="Fairhead C."/>
            <person name="Ferry-Dumazet H."/>
            <person name="Groppi A."/>
            <person name="Hantraye F."/>
            <person name="Hennequin C."/>
            <person name="Jauniaux N."/>
            <person name="Joyet P."/>
            <person name="Kachouri R."/>
            <person name="Kerrest A."/>
            <person name="Koszul R."/>
            <person name="Lemaire M."/>
            <person name="Lesur I."/>
            <person name="Ma L."/>
            <person name="Muller H."/>
            <person name="Nicaud J.-M."/>
            <person name="Nikolski M."/>
            <person name="Oztas S."/>
            <person name="Ozier-Kalogeropoulos O."/>
            <person name="Pellenz S."/>
            <person name="Potier S."/>
            <person name="Richard G.-F."/>
            <person name="Straub M.-L."/>
            <person name="Suleau A."/>
            <person name="Swennen D."/>
            <person name="Tekaia F."/>
            <person name="Wesolowski-Louvel M."/>
            <person name="Westhof E."/>
            <person name="Wirth B."/>
            <person name="Zeniou-Meyer M."/>
            <person name="Zivanovic Y."/>
            <person name="Bolotin-Fukuhara M."/>
            <person name="Thierry A."/>
            <person name="Bouchier C."/>
            <person name="Caudron B."/>
            <person name="Scarpelli C."/>
            <person name="Gaillardin C."/>
            <person name="Weissenbach J."/>
            <person name="Wincker P."/>
            <person name="Souciet J.-L."/>
        </authorList>
    </citation>
    <scope>NUCLEOTIDE SEQUENCE [LARGE SCALE GENOMIC DNA]</scope>
    <source>
        <strain>ATCC 2001 / BCRC 20586 / JCM 3761 / NBRC 0622 / NRRL Y-65 / CBS 138</strain>
    </source>
</reference>
<evidence type="ECO:0000250" key="1"/>
<evidence type="ECO:0000256" key="2">
    <source>
        <dbReference type="SAM" id="MobiDB-lite"/>
    </source>
</evidence>
<evidence type="ECO:0000305" key="3"/>
<keyword id="KW-0156">Chromatin regulator</keyword>
<keyword id="KW-0539">Nucleus</keyword>
<keyword id="KW-1185">Reference proteome</keyword>
<keyword id="KW-0677">Repeat</keyword>
<keyword id="KW-0678">Repressor</keyword>
<keyword id="KW-0804">Transcription</keyword>
<keyword id="KW-0805">Transcription regulation</keyword>
<keyword id="KW-0853">WD repeat</keyword>
<gene>
    <name type="primary">HIR2</name>
    <name type="ordered locus">CAGL0I00968g</name>
</gene>
<organism>
    <name type="scientific">Candida glabrata (strain ATCC 2001 / BCRC 20586 / JCM 3761 / NBRC 0622 / NRRL Y-65 / CBS 138)</name>
    <name type="common">Yeast</name>
    <name type="synonym">Nakaseomyces glabratus</name>
    <dbReference type="NCBI Taxonomy" id="284593"/>
    <lineage>
        <taxon>Eukaryota</taxon>
        <taxon>Fungi</taxon>
        <taxon>Dikarya</taxon>
        <taxon>Ascomycota</taxon>
        <taxon>Saccharomycotina</taxon>
        <taxon>Saccharomycetes</taxon>
        <taxon>Saccharomycetales</taxon>
        <taxon>Saccharomycetaceae</taxon>
        <taxon>Nakaseomyces</taxon>
    </lineage>
</organism>
<comment type="function">
    <text evidence="1">Required for replication-independent chromatin assembly and for the periodic repression of histone gene transcription during the cell cycle.</text>
</comment>
<comment type="subcellular location">
    <subcellularLocation>
        <location evidence="1">Nucleus</location>
    </subcellularLocation>
</comment>
<comment type="similarity">
    <text evidence="3">Belongs to the WD repeat HIR1 family.</text>
</comment>
<sequence length="997" mass="110772">MRLLKYPLEGISGNVTSLVTIDAEYVVVCGSRGDIQVWHQQQLLDTAFDRCTLETLKPKYSFTFELKDDEDELVFAMGDRDCLYLGTEHSVYSYSGWLKALESGHTTLENKLIYTTVSQSIITDVKWDSLLDILFVLTDRPCKIHLFDTRSANKKEITSIALDKNSKPLTGVVDPSGAGTFTVLTSDRSIVVYHINRTGDYKEVKKLSQHVLVYPLHYKITMPPQADFLPIINSLKGSSGAAGSTATVLLNRNENYKVMSTLVPSASSNTKVLVHSPKMYEKANLKRGTISRYNLVATSTNTDGSIMIWNTKRGKPLFAPLNISDSAINDMIWSSNGLTLFAVSNDNVLYTFAFLQDDLGKTVPMEEIENIRQSNIIKEPLPIAYVITASDGLGDISTSKNQGLGVAADNSSNILSTDTNTNEKNLSTVNTTEPQTNSQSSSYNNKPESKLDSSKSEITSADSSDEKAKNLEARPIEAKSKKILNGKNLESKSSSVTTSDNIQKKVEDSKSNVSVTATEKKTKPDKKSIKSENGESKVNKAQNTISPKESNTTDNKSTTPDFKNPSYQVPKDLKRKPKEDALGNAVTKRAKKDLEPVDFLDTGLLLPNVAFSRVRLSTPLIRMNIDCTSSNDSKILLNIRNGSGNEQKPTIVKLLDKTVTPERTLFQDFIPKFVSLATSGDDFWACSSEDGTLYIFNDVGRKIIPPLTIGVPISFLEACGKYLLCVSSIGELYCWNIASSKLEFPVTTIFPLLSPSIRYSDDILTRAENITMCSVTNNGFPIATLSNGDGYMYDKNMETWLLVSDGWWAYGSQYWDSTNNSNLIPDSSTKPTEGQSSTEISKASIVTLLEKKTNNELTRKGRIKNLRRFARTILMKEGFENIEEIVTLSHLENKLLVTLRLEEQHEFKKLIKLYAVKLGELGYVDRLRDLFAWIISDSNDNGDLIPGINRKELVKTLLTACADLRSVQRVTIDYADMLGYLPNDIFFDCESQNDTGK</sequence>